<reference key="1">
    <citation type="journal article" date="2004" name="J. Mol. Evol.">
        <title>Comparative analysis of the complete plastid genome sequence of the red alga Gracilaria tenuistipitata var. liui provides insights into the evolution of rhodoplasts and their relationship to other plastids.</title>
        <authorList>
            <person name="Hagopian J.C."/>
            <person name="Reis M."/>
            <person name="Kitajima J.P."/>
            <person name="Bhattacharya D."/>
            <person name="de Oliveira M.C."/>
        </authorList>
    </citation>
    <scope>NUCLEOTIDE SEQUENCE [LARGE SCALE GENOMIC DNA]</scope>
</reference>
<feature type="chain" id="PRO_0000146402" description="Small ribosomal subunit protein uS12c">
    <location>
        <begin position="1"/>
        <end position="124"/>
    </location>
</feature>
<feature type="region of interest" description="Disordered" evidence="2">
    <location>
        <begin position="1"/>
        <end position="28"/>
    </location>
</feature>
<feature type="region of interest" description="Disordered" evidence="2">
    <location>
        <begin position="104"/>
        <end position="124"/>
    </location>
</feature>
<feature type="compositionally biased region" description="Basic residues" evidence="2">
    <location>
        <begin position="11"/>
        <end position="20"/>
    </location>
</feature>
<feature type="compositionally biased region" description="Basic residues" evidence="2">
    <location>
        <begin position="109"/>
        <end position="124"/>
    </location>
</feature>
<dbReference type="EMBL" id="AY673996">
    <property type="protein sequence ID" value="AAT79657.1"/>
    <property type="molecule type" value="Genomic_DNA"/>
</dbReference>
<dbReference type="RefSeq" id="YP_063582.1">
    <property type="nucleotide sequence ID" value="NC_006137.1"/>
</dbReference>
<dbReference type="SMR" id="Q6B8X8"/>
<dbReference type="GeneID" id="2944103"/>
<dbReference type="GO" id="GO:0009507">
    <property type="term" value="C:chloroplast"/>
    <property type="evidence" value="ECO:0007669"/>
    <property type="project" value="UniProtKB-SubCell"/>
</dbReference>
<dbReference type="GO" id="GO:0015935">
    <property type="term" value="C:small ribosomal subunit"/>
    <property type="evidence" value="ECO:0007669"/>
    <property type="project" value="InterPro"/>
</dbReference>
<dbReference type="GO" id="GO:0019843">
    <property type="term" value="F:rRNA binding"/>
    <property type="evidence" value="ECO:0007669"/>
    <property type="project" value="UniProtKB-UniRule"/>
</dbReference>
<dbReference type="GO" id="GO:0003735">
    <property type="term" value="F:structural constituent of ribosome"/>
    <property type="evidence" value="ECO:0007669"/>
    <property type="project" value="InterPro"/>
</dbReference>
<dbReference type="GO" id="GO:0006412">
    <property type="term" value="P:translation"/>
    <property type="evidence" value="ECO:0007669"/>
    <property type="project" value="UniProtKB-UniRule"/>
</dbReference>
<dbReference type="CDD" id="cd03368">
    <property type="entry name" value="Ribosomal_S12"/>
    <property type="match status" value="1"/>
</dbReference>
<dbReference type="FunFam" id="2.40.50.140:FF:000001">
    <property type="entry name" value="30S ribosomal protein S12"/>
    <property type="match status" value="1"/>
</dbReference>
<dbReference type="Gene3D" id="2.40.50.140">
    <property type="entry name" value="Nucleic acid-binding proteins"/>
    <property type="match status" value="1"/>
</dbReference>
<dbReference type="HAMAP" id="MF_00403_B">
    <property type="entry name" value="Ribosomal_uS12_B"/>
    <property type="match status" value="1"/>
</dbReference>
<dbReference type="InterPro" id="IPR012340">
    <property type="entry name" value="NA-bd_OB-fold"/>
</dbReference>
<dbReference type="InterPro" id="IPR006032">
    <property type="entry name" value="Ribosomal_uS12"/>
</dbReference>
<dbReference type="InterPro" id="IPR005679">
    <property type="entry name" value="Ribosomal_uS12_bac"/>
</dbReference>
<dbReference type="NCBIfam" id="TIGR00981">
    <property type="entry name" value="rpsL_bact"/>
    <property type="match status" value="1"/>
</dbReference>
<dbReference type="PANTHER" id="PTHR11652">
    <property type="entry name" value="30S RIBOSOMAL PROTEIN S12 FAMILY MEMBER"/>
    <property type="match status" value="1"/>
</dbReference>
<dbReference type="Pfam" id="PF00164">
    <property type="entry name" value="Ribosom_S12_S23"/>
    <property type="match status" value="1"/>
</dbReference>
<dbReference type="PIRSF" id="PIRSF002133">
    <property type="entry name" value="Ribosomal_S12/S23"/>
    <property type="match status" value="1"/>
</dbReference>
<dbReference type="PRINTS" id="PR01034">
    <property type="entry name" value="RIBOSOMALS12"/>
</dbReference>
<dbReference type="SUPFAM" id="SSF50249">
    <property type="entry name" value="Nucleic acid-binding proteins"/>
    <property type="match status" value="1"/>
</dbReference>
<dbReference type="PROSITE" id="PS00055">
    <property type="entry name" value="RIBOSOMAL_S12"/>
    <property type="match status" value="1"/>
</dbReference>
<proteinExistence type="inferred from homology"/>
<gene>
    <name type="primary">rps12</name>
    <name type="ordered locus">Grc000076</name>
</gene>
<keyword id="KW-0150">Chloroplast</keyword>
<keyword id="KW-0934">Plastid</keyword>
<keyword id="KW-0687">Ribonucleoprotein</keyword>
<keyword id="KW-0689">Ribosomal protein</keyword>
<keyword id="KW-0694">RNA-binding</keyword>
<keyword id="KW-0699">rRNA-binding</keyword>
<protein>
    <recommendedName>
        <fullName evidence="3">Small ribosomal subunit protein uS12c</fullName>
    </recommendedName>
    <alternativeName>
        <fullName>30S ribosomal protein S12, chloroplastic</fullName>
    </alternativeName>
</protein>
<sequence>MPTIQQLVRSERHKSSKKTKSPALKGCPQRRGVCTRVYTTTPKKPNSALRKVARVRLTSGFEVTAYIPGIGHNIQEHSVVLIRGGRVKDLPGVRYHIVRGILDASGVKDRKKSRSKYGAKQPKT</sequence>
<comment type="function">
    <text evidence="1">With S4 and S5 plays an important role in translational accuracy. Located at the interface of the 30S and 50S subunits (By similarity).</text>
</comment>
<comment type="subunit">
    <text evidence="1">Part of the 30S ribosomal subunit.</text>
</comment>
<comment type="subcellular location">
    <subcellularLocation>
        <location>Plastid</location>
        <location>Chloroplast</location>
    </subcellularLocation>
</comment>
<comment type="similarity">
    <text evidence="3">Belongs to the universal ribosomal protein uS12 family.</text>
</comment>
<organism>
    <name type="scientific">Gracilaria tenuistipitata var. liui</name>
    <name type="common">Red alga</name>
    <dbReference type="NCBI Taxonomy" id="285951"/>
    <lineage>
        <taxon>Eukaryota</taxon>
        <taxon>Rhodophyta</taxon>
        <taxon>Florideophyceae</taxon>
        <taxon>Rhodymeniophycidae</taxon>
        <taxon>Gracilariales</taxon>
        <taxon>Gracilariaceae</taxon>
        <taxon>Gracilaria</taxon>
        <taxon>Gracilaria tenuistipitata</taxon>
    </lineage>
</organism>
<geneLocation type="chloroplast"/>
<accession>Q6B8X8</accession>
<name>RR12_GRATL</name>
<evidence type="ECO:0000250" key="1"/>
<evidence type="ECO:0000256" key="2">
    <source>
        <dbReference type="SAM" id="MobiDB-lite"/>
    </source>
</evidence>
<evidence type="ECO:0000305" key="3"/>